<reference key="1">
    <citation type="journal article" date="1997" name="Nature">
        <title>The nucleotide sequence of Saccharomyces cerevisiae chromosome IV.</title>
        <authorList>
            <person name="Jacq C."/>
            <person name="Alt-Moerbe J."/>
            <person name="Andre B."/>
            <person name="Arnold W."/>
            <person name="Bahr A."/>
            <person name="Ballesta J.P.G."/>
            <person name="Bargues M."/>
            <person name="Baron L."/>
            <person name="Becker A."/>
            <person name="Biteau N."/>
            <person name="Bloecker H."/>
            <person name="Blugeon C."/>
            <person name="Boskovic J."/>
            <person name="Brandt P."/>
            <person name="Brueckner M."/>
            <person name="Buitrago M.J."/>
            <person name="Coster F."/>
            <person name="Delaveau T."/>
            <person name="del Rey F."/>
            <person name="Dujon B."/>
            <person name="Eide L.G."/>
            <person name="Garcia-Cantalejo J.M."/>
            <person name="Goffeau A."/>
            <person name="Gomez-Peris A."/>
            <person name="Granotier C."/>
            <person name="Hanemann V."/>
            <person name="Hankeln T."/>
            <person name="Hoheisel J.D."/>
            <person name="Jaeger W."/>
            <person name="Jimenez A."/>
            <person name="Jonniaux J.-L."/>
            <person name="Kraemer C."/>
            <person name="Kuester H."/>
            <person name="Laamanen P."/>
            <person name="Legros Y."/>
            <person name="Louis E.J."/>
            <person name="Moeller-Rieker S."/>
            <person name="Monnet A."/>
            <person name="Moro M."/>
            <person name="Mueller-Auer S."/>
            <person name="Nussbaumer B."/>
            <person name="Paricio N."/>
            <person name="Paulin L."/>
            <person name="Perea J."/>
            <person name="Perez-Alonso M."/>
            <person name="Perez-Ortin J.E."/>
            <person name="Pohl T.M."/>
            <person name="Prydz H."/>
            <person name="Purnelle B."/>
            <person name="Rasmussen S.W."/>
            <person name="Remacha M.A."/>
            <person name="Revuelta J.L."/>
            <person name="Rieger M."/>
            <person name="Salom D."/>
            <person name="Saluz H.P."/>
            <person name="Saiz J.E."/>
            <person name="Saren A.-M."/>
            <person name="Schaefer M."/>
            <person name="Scharfe M."/>
            <person name="Schmidt E.R."/>
            <person name="Schneider C."/>
            <person name="Scholler P."/>
            <person name="Schwarz S."/>
            <person name="Soler-Mira A."/>
            <person name="Urrestarazu L.A."/>
            <person name="Verhasselt P."/>
            <person name="Vissers S."/>
            <person name="Voet M."/>
            <person name="Volckaert G."/>
            <person name="Wagner G."/>
            <person name="Wambutt R."/>
            <person name="Wedler E."/>
            <person name="Wedler H."/>
            <person name="Woelfl S."/>
            <person name="Harris D.E."/>
            <person name="Bowman S."/>
            <person name="Brown D."/>
            <person name="Churcher C.M."/>
            <person name="Connor R."/>
            <person name="Dedman K."/>
            <person name="Gentles S."/>
            <person name="Hamlin N."/>
            <person name="Hunt S."/>
            <person name="Jones L."/>
            <person name="McDonald S."/>
            <person name="Murphy L.D."/>
            <person name="Niblett D."/>
            <person name="Odell C."/>
            <person name="Oliver K."/>
            <person name="Rajandream M.A."/>
            <person name="Richards C."/>
            <person name="Shore L."/>
            <person name="Walsh S.V."/>
            <person name="Barrell B.G."/>
            <person name="Dietrich F.S."/>
            <person name="Mulligan J.T."/>
            <person name="Allen E."/>
            <person name="Araujo R."/>
            <person name="Aviles E."/>
            <person name="Berno A."/>
            <person name="Carpenter J."/>
            <person name="Chen E."/>
            <person name="Cherry J.M."/>
            <person name="Chung E."/>
            <person name="Duncan M."/>
            <person name="Hunicke-Smith S."/>
            <person name="Hyman R.W."/>
            <person name="Komp C."/>
            <person name="Lashkari D."/>
            <person name="Lew H."/>
            <person name="Lin D."/>
            <person name="Mosedale D."/>
            <person name="Nakahara K."/>
            <person name="Namath A."/>
            <person name="Oefner P."/>
            <person name="Oh C."/>
            <person name="Petel F.X."/>
            <person name="Roberts D."/>
            <person name="Schramm S."/>
            <person name="Schroeder M."/>
            <person name="Shogren T."/>
            <person name="Shroff N."/>
            <person name="Winant A."/>
            <person name="Yelton M.A."/>
            <person name="Botstein D."/>
            <person name="Davis R.W."/>
            <person name="Johnston M."/>
            <person name="Andrews S."/>
            <person name="Brinkman R."/>
            <person name="Cooper J."/>
            <person name="Ding H."/>
            <person name="Du Z."/>
            <person name="Favello A."/>
            <person name="Fulton L."/>
            <person name="Gattung S."/>
            <person name="Greco T."/>
            <person name="Hallsworth K."/>
            <person name="Hawkins J."/>
            <person name="Hillier L.W."/>
            <person name="Jier M."/>
            <person name="Johnson D."/>
            <person name="Johnston L."/>
            <person name="Kirsten J."/>
            <person name="Kucaba T."/>
            <person name="Langston Y."/>
            <person name="Latreille P."/>
            <person name="Le T."/>
            <person name="Mardis E."/>
            <person name="Menezes S."/>
            <person name="Miller N."/>
            <person name="Nhan M."/>
            <person name="Pauley A."/>
            <person name="Peluso D."/>
            <person name="Rifkin L."/>
            <person name="Riles L."/>
            <person name="Taich A."/>
            <person name="Trevaskis E."/>
            <person name="Vignati D."/>
            <person name="Wilcox L."/>
            <person name="Wohldman P."/>
            <person name="Vaudin M."/>
            <person name="Wilson R."/>
            <person name="Waterston R."/>
            <person name="Albermann K."/>
            <person name="Hani J."/>
            <person name="Heumann K."/>
            <person name="Kleine K."/>
            <person name="Mewes H.-W."/>
            <person name="Zollner A."/>
            <person name="Zaccaria P."/>
        </authorList>
    </citation>
    <scope>NUCLEOTIDE SEQUENCE [LARGE SCALE GENOMIC DNA]</scope>
    <source>
        <strain>ATCC 204508 / S288c</strain>
    </source>
</reference>
<reference key="2">
    <citation type="journal article" date="2014" name="G3 (Bethesda)">
        <title>The reference genome sequence of Saccharomyces cerevisiae: Then and now.</title>
        <authorList>
            <person name="Engel S.R."/>
            <person name="Dietrich F.S."/>
            <person name="Fisk D.G."/>
            <person name="Binkley G."/>
            <person name="Balakrishnan R."/>
            <person name="Costanzo M.C."/>
            <person name="Dwight S.S."/>
            <person name="Hitz B.C."/>
            <person name="Karra K."/>
            <person name="Nash R.S."/>
            <person name="Weng S."/>
            <person name="Wong E.D."/>
            <person name="Lloyd P."/>
            <person name="Skrzypek M.S."/>
            <person name="Miyasato S.R."/>
            <person name="Simison M."/>
            <person name="Cherry J.M."/>
        </authorList>
    </citation>
    <scope>GENOME REANNOTATION</scope>
    <source>
        <strain>ATCC 204508 / S288c</strain>
    </source>
</reference>
<reference key="3">
    <citation type="journal article" date="2006" name="Biochim. Biophys. Acta">
        <title>Ysp2 mediates death of yeast induced by amiodarone or intracellular acidification.</title>
        <authorList>
            <person name="Sokolov S."/>
            <person name="Knorre D."/>
            <person name="Smirnova E."/>
            <person name="Markova O."/>
            <person name="Pozniakovsky A."/>
            <person name="Skulachev V."/>
            <person name="Severin F."/>
        </authorList>
    </citation>
    <scope>FUNCTION</scope>
    <scope>SUBCELLULAR LOCATION</scope>
</reference>
<reference key="4">
    <citation type="journal article" date="2007" name="J. Proteome Res.">
        <title>Large-scale phosphorylation analysis of alpha-factor-arrested Saccharomyces cerevisiae.</title>
        <authorList>
            <person name="Li X."/>
            <person name="Gerber S.A."/>
            <person name="Rudner A.D."/>
            <person name="Beausoleil S.A."/>
            <person name="Haas W."/>
            <person name="Villen J."/>
            <person name="Elias J.E."/>
            <person name="Gygi S.P."/>
        </authorList>
    </citation>
    <scope>PHOSPHORYLATION [LARGE SCALE ANALYSIS] AT SER-13</scope>
    <scope>IDENTIFICATION BY MASS SPECTROMETRY [LARGE SCALE ANALYSIS]</scope>
    <source>
        <strain>ADR376</strain>
    </source>
</reference>
<reference key="5">
    <citation type="journal article" date="2007" name="Proc. Natl. Acad. Sci. U.S.A.">
        <title>Analysis of phosphorylation sites on proteins from Saccharomyces cerevisiae by electron transfer dissociation (ETD) mass spectrometry.</title>
        <authorList>
            <person name="Chi A."/>
            <person name="Huttenhower C."/>
            <person name="Geer L.Y."/>
            <person name="Coon J.J."/>
            <person name="Syka J.E.P."/>
            <person name="Bai D.L."/>
            <person name="Shabanowitz J."/>
            <person name="Burke D.J."/>
            <person name="Troyanskaya O.G."/>
            <person name="Hunt D.F."/>
        </authorList>
    </citation>
    <scope>PHOSPHORYLATION [LARGE SCALE ANALYSIS] AT SER-13</scope>
    <scope>IDENTIFICATION BY MASS SPECTROMETRY [LARGE SCALE ANALYSIS]</scope>
</reference>
<reference key="6">
    <citation type="journal article" date="2008" name="Mol. Cell. Proteomics">
        <title>A multidimensional chromatography technology for in-depth phosphoproteome analysis.</title>
        <authorList>
            <person name="Albuquerque C.P."/>
            <person name="Smolka M.B."/>
            <person name="Payne S.H."/>
            <person name="Bafna V."/>
            <person name="Eng J."/>
            <person name="Zhou H."/>
        </authorList>
    </citation>
    <scope>IDENTIFICATION BY MASS SPECTROMETRY [LARGE SCALE ANALYSIS]</scope>
</reference>
<reference key="7">
    <citation type="journal article" date="2009" name="Science">
        <title>Global analysis of Cdk1 substrate phosphorylation sites provides insights into evolution.</title>
        <authorList>
            <person name="Holt L.J."/>
            <person name="Tuch B.B."/>
            <person name="Villen J."/>
            <person name="Johnson A.D."/>
            <person name="Gygi S.P."/>
            <person name="Morgan D.O."/>
        </authorList>
    </citation>
    <scope>PHOSPHORYLATION [LARGE SCALE ANALYSIS] AT SER-411; SER-596 AND SER-1032</scope>
    <scope>IDENTIFICATION BY MASS SPECTROMETRY [LARGE SCALE ANALYSIS]</scope>
</reference>
<reference key="8">
    <citation type="journal article" date="2015" name="Elife">
        <title>A new family of StART domain proteins at membrane contact sites has a role in ER-PM sterol transport.</title>
        <authorList>
            <person name="Gatta A.T."/>
            <person name="Wong L.H."/>
            <person name="Sere Y.Y."/>
            <person name="Calderon-Norena D.M."/>
            <person name="Cockcroft S."/>
            <person name="Menon A.K."/>
            <person name="Levine T.P."/>
        </authorList>
    </citation>
    <scope>FUNCTION</scope>
    <scope>SUBCELLULAR LOCATION</scope>
    <scope>MUTAGENESIS OF GLY-1205</scope>
</reference>
<reference key="9">
    <citation type="journal article" date="2015" name="J. Cell Biol.">
        <title>Ltc1 is an ER-localized sterol transporter and a component of ER-mitochondria and ER-vacuole contacts.</title>
        <authorList>
            <person name="Murley A."/>
            <person name="Sarsam R.D."/>
            <person name="Toulmay A."/>
            <person name="Yamada J."/>
            <person name="Prinz W.A."/>
            <person name="Nunnari J."/>
        </authorList>
    </citation>
    <scope>GENE FAMILY</scope>
</reference>
<evidence type="ECO:0000255" key="1"/>
<evidence type="ECO:0000255" key="2">
    <source>
        <dbReference type="PROSITE-ProRule" id="PRU00498"/>
    </source>
</evidence>
<evidence type="ECO:0000255" key="3">
    <source>
        <dbReference type="PROSITE-ProRule" id="PRU01114"/>
    </source>
</evidence>
<evidence type="ECO:0000256" key="4">
    <source>
        <dbReference type="SAM" id="MobiDB-lite"/>
    </source>
</evidence>
<evidence type="ECO:0000269" key="5">
    <source>
    </source>
</evidence>
<evidence type="ECO:0000269" key="6">
    <source>
    </source>
</evidence>
<evidence type="ECO:0000303" key="7">
    <source>
    </source>
</evidence>
<evidence type="ECO:0000303" key="8">
    <source>
    </source>
</evidence>
<evidence type="ECO:0000303" key="9">
    <source>
    </source>
</evidence>
<evidence type="ECO:0000305" key="10"/>
<evidence type="ECO:0000305" key="11">
    <source>
    </source>
</evidence>
<evidence type="ECO:0000312" key="12">
    <source>
        <dbReference type="SGD" id="S000002734"/>
    </source>
</evidence>
<evidence type="ECO:0007744" key="13">
    <source>
    </source>
</evidence>
<evidence type="ECO:0007744" key="14">
    <source>
    </source>
</evidence>
<evidence type="ECO:0007744" key="15">
    <source>
    </source>
</evidence>
<evidence type="ECO:0007829" key="16">
    <source>
        <dbReference type="PDB" id="5YQI"/>
    </source>
</evidence>
<evidence type="ECO:0007829" key="17">
    <source>
        <dbReference type="PDB" id="5YQQ"/>
    </source>
</evidence>
<evidence type="ECO:0007829" key="18">
    <source>
        <dbReference type="PDB" id="5YS0"/>
    </source>
</evidence>
<evidence type="ECO:0007829" key="19">
    <source>
        <dbReference type="PDB" id="6CAY"/>
    </source>
</evidence>
<name>YSP2_YEAST</name>
<proteinExistence type="evidence at protein level"/>
<protein>
    <recommendedName>
        <fullName evidence="9">Membrane-anchored lipid-binding protein YSP2</fullName>
    </recommendedName>
    <alternativeName>
        <fullName evidence="8">Lipid transfer at contact site protein 4</fullName>
    </alternativeName>
    <alternativeName>
        <fullName evidence="9">Lipid transfer protein anchored at membrane contact sites 3</fullName>
    </alternativeName>
    <alternativeName>
        <fullName evidence="7">Yeast suicide protein 2</fullName>
    </alternativeName>
</protein>
<comment type="function">
    <text evidence="5 6">Involved in induction of programmed cell death in response to reactive oxygen species (ROS) (PubMed:16962064). May be involved in sterol transfer between intracellular membranes (PubMed:26001273).</text>
</comment>
<comment type="subcellular location">
    <subcellularLocation>
        <location evidence="5">Mitochondrion membrane</location>
        <topology evidence="1">Single-pass membrane protein</topology>
    </subcellularLocation>
    <subcellularLocation>
        <location evidence="6">Endoplasmic reticulum membrane</location>
        <topology evidence="1">Single-pass membrane protein</topology>
    </subcellularLocation>
    <text evidence="6">Localizes to puncta in the cell periphery representing cortical endoplasmic reticulum (cER)-plasma membrane (PM) membrane contact sites.</text>
</comment>
<comment type="domain">
    <text evidence="6">The VASt domains bind sterols.</text>
</comment>
<comment type="similarity">
    <text evidence="10">Belongs to the YSP2 family.</text>
</comment>
<organism>
    <name type="scientific">Saccharomyces cerevisiae (strain ATCC 204508 / S288c)</name>
    <name type="common">Baker's yeast</name>
    <dbReference type="NCBI Taxonomy" id="559292"/>
    <lineage>
        <taxon>Eukaryota</taxon>
        <taxon>Fungi</taxon>
        <taxon>Dikarya</taxon>
        <taxon>Ascomycota</taxon>
        <taxon>Saccharomycotina</taxon>
        <taxon>Saccharomycetes</taxon>
        <taxon>Saccharomycetales</taxon>
        <taxon>Saccharomycetaceae</taxon>
        <taxon>Saccharomyces</taxon>
    </lineage>
</organism>
<feature type="chain" id="PRO_0000253815" description="Membrane-anchored lipid-binding protein YSP2">
    <location>
        <begin position="1"/>
        <end position="1438"/>
    </location>
</feature>
<feature type="topological domain" description="Cytoplasmic" evidence="10">
    <location>
        <begin position="1"/>
        <end position="1277"/>
    </location>
</feature>
<feature type="transmembrane region" description="Helical" evidence="1">
    <location>
        <begin position="1278"/>
        <end position="1298"/>
    </location>
</feature>
<feature type="topological domain" description="Lumenal" evidence="10">
    <location>
        <begin position="1299"/>
        <end position="1438"/>
    </location>
</feature>
<feature type="domain" description="GRAM" evidence="1">
    <location>
        <begin position="648"/>
        <end position="716"/>
    </location>
</feature>
<feature type="domain" description="VASt 1" evidence="3">
    <location>
        <begin position="851"/>
        <end position="1018"/>
    </location>
</feature>
<feature type="domain" description="VASt 2" evidence="3">
    <location>
        <begin position="1059"/>
        <end position="1225"/>
    </location>
</feature>
<feature type="region of interest" description="Disordered" evidence="4">
    <location>
        <begin position="1"/>
        <end position="97"/>
    </location>
</feature>
<feature type="region of interest" description="Disordered" evidence="4">
    <location>
        <begin position="174"/>
        <end position="194"/>
    </location>
</feature>
<feature type="region of interest" description="Disordered" evidence="4">
    <location>
        <begin position="200"/>
        <end position="219"/>
    </location>
</feature>
<feature type="region of interest" description="Disordered" evidence="4">
    <location>
        <begin position="285"/>
        <end position="308"/>
    </location>
</feature>
<feature type="region of interest" description="Disordered" evidence="4">
    <location>
        <begin position="338"/>
        <end position="418"/>
    </location>
</feature>
<feature type="region of interest" description="Disordered" evidence="4">
    <location>
        <begin position="455"/>
        <end position="485"/>
    </location>
</feature>
<feature type="region of interest" description="Disordered" evidence="4">
    <location>
        <begin position="505"/>
        <end position="543"/>
    </location>
</feature>
<feature type="region of interest" description="Disordered" evidence="4">
    <location>
        <begin position="777"/>
        <end position="843"/>
    </location>
</feature>
<feature type="region of interest" description="Disordered" evidence="4">
    <location>
        <begin position="1225"/>
        <end position="1257"/>
    </location>
</feature>
<feature type="compositionally biased region" description="Basic and acidic residues" evidence="4">
    <location>
        <begin position="1"/>
        <end position="17"/>
    </location>
</feature>
<feature type="compositionally biased region" description="Basic residues" evidence="4">
    <location>
        <begin position="18"/>
        <end position="29"/>
    </location>
</feature>
<feature type="compositionally biased region" description="Basic and acidic residues" evidence="4">
    <location>
        <begin position="30"/>
        <end position="44"/>
    </location>
</feature>
<feature type="compositionally biased region" description="Low complexity" evidence="4">
    <location>
        <begin position="45"/>
        <end position="58"/>
    </location>
</feature>
<feature type="compositionally biased region" description="Polar residues" evidence="4">
    <location>
        <begin position="74"/>
        <end position="97"/>
    </location>
</feature>
<feature type="compositionally biased region" description="Low complexity" evidence="4">
    <location>
        <begin position="286"/>
        <end position="298"/>
    </location>
</feature>
<feature type="compositionally biased region" description="Low complexity" evidence="4">
    <location>
        <begin position="374"/>
        <end position="398"/>
    </location>
</feature>
<feature type="compositionally biased region" description="Low complexity" evidence="4">
    <location>
        <begin position="455"/>
        <end position="470"/>
    </location>
</feature>
<feature type="compositionally biased region" description="Polar residues" evidence="4">
    <location>
        <begin position="471"/>
        <end position="485"/>
    </location>
</feature>
<feature type="compositionally biased region" description="Acidic residues" evidence="4">
    <location>
        <begin position="783"/>
        <end position="800"/>
    </location>
</feature>
<feature type="compositionally biased region" description="Polar residues" evidence="4">
    <location>
        <begin position="818"/>
        <end position="832"/>
    </location>
</feature>
<feature type="compositionally biased region" description="Basic residues" evidence="4">
    <location>
        <begin position="1227"/>
        <end position="1243"/>
    </location>
</feature>
<feature type="modified residue" description="Phosphoserine" evidence="13 14">
    <location>
        <position position="13"/>
    </location>
</feature>
<feature type="modified residue" description="Phosphoserine" evidence="15">
    <location>
        <position position="411"/>
    </location>
</feature>
<feature type="modified residue" description="Phosphoserine" evidence="15">
    <location>
        <position position="596"/>
    </location>
</feature>
<feature type="modified residue" description="Phosphoserine" evidence="15">
    <location>
        <position position="1032"/>
    </location>
</feature>
<feature type="glycosylation site" description="N-linked (GlcNAc...) asparagine" evidence="2">
    <location>
        <position position="1306"/>
    </location>
</feature>
<feature type="glycosylation site" description="N-linked (GlcNAc...) asparagine" evidence="2">
    <location>
        <position position="1373"/>
    </location>
</feature>
<feature type="glycosylation site" description="N-linked (GlcNAc...) asparagine" evidence="2">
    <location>
        <position position="1430"/>
    </location>
</feature>
<feature type="mutagenesis site" description="Reduces the ability to bind sterol." evidence="11">
    <original>G</original>
    <variation>A</variation>
    <variation>T</variation>
    <location>
        <position position="1205"/>
    </location>
</feature>
<feature type="mutagenesis site" description="Abolishes the ability to bind sterol." evidence="11">
    <original>G</original>
    <variation>R</variation>
    <location>
        <position position="1205"/>
    </location>
</feature>
<feature type="helix" evidence="16">
    <location>
        <begin position="851"/>
        <end position="853"/>
    </location>
</feature>
<feature type="strand" evidence="16">
    <location>
        <begin position="854"/>
        <end position="862"/>
    </location>
</feature>
<feature type="helix" evidence="16">
    <location>
        <begin position="864"/>
        <end position="872"/>
    </location>
</feature>
<feature type="helix" evidence="16">
    <location>
        <begin position="877"/>
        <end position="885"/>
    </location>
</feature>
<feature type="helix" evidence="16">
    <location>
        <begin position="898"/>
        <end position="901"/>
    </location>
</feature>
<feature type="strand" evidence="16">
    <location>
        <begin position="902"/>
        <end position="911"/>
    </location>
</feature>
<feature type="strand" evidence="19">
    <location>
        <begin position="914"/>
        <end position="917"/>
    </location>
</feature>
<feature type="strand" evidence="16">
    <location>
        <begin position="919"/>
        <end position="933"/>
    </location>
</feature>
<feature type="turn" evidence="16">
    <location>
        <begin position="934"/>
        <end position="936"/>
    </location>
</feature>
<feature type="strand" evidence="16">
    <location>
        <begin position="937"/>
        <end position="945"/>
    </location>
</feature>
<feature type="turn" evidence="16">
    <location>
        <begin position="950"/>
        <end position="953"/>
    </location>
</feature>
<feature type="strand" evidence="16">
    <location>
        <begin position="954"/>
        <end position="966"/>
    </location>
</feature>
<feature type="turn" evidence="16">
    <location>
        <begin position="967"/>
        <end position="969"/>
    </location>
</feature>
<feature type="strand" evidence="16">
    <location>
        <begin position="970"/>
        <end position="983"/>
    </location>
</feature>
<feature type="helix" evidence="16">
    <location>
        <begin position="988"/>
        <end position="1013"/>
    </location>
</feature>
<feature type="strand" evidence="17">
    <location>
        <begin position="1061"/>
        <end position="1071"/>
    </location>
</feature>
<feature type="helix" evidence="17">
    <location>
        <begin position="1073"/>
        <end position="1081"/>
    </location>
</feature>
<feature type="helix" evidence="17">
    <location>
        <begin position="1086"/>
        <end position="1094"/>
    </location>
</feature>
<feature type="strand" evidence="17">
    <location>
        <begin position="1097"/>
        <end position="1099"/>
    </location>
</feature>
<feature type="strand" evidence="17">
    <location>
        <begin position="1110"/>
        <end position="1117"/>
    </location>
</feature>
<feature type="strand" evidence="18">
    <location>
        <begin position="1121"/>
        <end position="1124"/>
    </location>
</feature>
<feature type="strand" evidence="17">
    <location>
        <begin position="1128"/>
        <end position="1140"/>
    </location>
</feature>
<feature type="turn" evidence="17">
    <location>
        <begin position="1141"/>
        <end position="1143"/>
    </location>
</feature>
<feature type="strand" evidence="17">
    <location>
        <begin position="1144"/>
        <end position="1152"/>
    </location>
</feature>
<feature type="helix" evidence="17">
    <location>
        <begin position="1159"/>
        <end position="1161"/>
    </location>
</feature>
<feature type="strand" evidence="17">
    <location>
        <begin position="1162"/>
        <end position="1173"/>
    </location>
</feature>
<feature type="turn" evidence="17">
    <location>
        <begin position="1174"/>
        <end position="1176"/>
    </location>
</feature>
<feature type="strand" evidence="17">
    <location>
        <begin position="1177"/>
        <end position="1188"/>
    </location>
</feature>
<feature type="helix" evidence="17">
    <location>
        <begin position="1193"/>
        <end position="1221"/>
    </location>
</feature>
<gene>
    <name evidence="7" type="primary">YSP2</name>
    <name evidence="9" type="synonym">LAM2</name>
    <name evidence="8" type="synonym">LTC4</name>
    <name evidence="12" type="ordered locus">YDR326C</name>
</gene>
<keyword id="KW-0002">3D-structure</keyword>
<keyword id="KW-0053">Apoptosis</keyword>
<keyword id="KW-0256">Endoplasmic reticulum</keyword>
<keyword id="KW-0325">Glycoprotein</keyword>
<keyword id="KW-0472">Membrane</keyword>
<keyword id="KW-0496">Mitochondrion</keyword>
<keyword id="KW-0597">Phosphoprotein</keyword>
<keyword id="KW-1185">Reference proteome</keyword>
<keyword id="KW-0812">Transmembrane</keyword>
<keyword id="KW-1133">Transmembrane helix</keyword>
<sequence>MRDEATRKKRSFSDGHFFKKLKLMSRKKQPVMERSKTTRTRKESTNSAAKSSLSLRRANNGRKTIAKRRVLTDIGSTNEGVAGNSGSNSPAQYSHTPHFSDSIPPLPLELPDIVSIRSSRSHISNKSNKNKHGIDLTFIPRRSLQNSKAGLKKPNTSPQGYFNIPVTIDRASEKVKHTDTKNTFNSSSSENERPVLSILQKDDSQSSSHPAIDSMSAPNNINNNNDIENSSNSLFDTILSIAHSAISHVPKISALNTEIQREFSHSGESHTGSTRHPYFHIHHAQQQHPLSQQQGPLPVSENANQNPNDTVLIHSPSANTAHRSSSFLRHLDYLLSPTSGPASDKHTQVEEGDDEEELSPLSKAFLSPSTQLVPTNTSTTPLSGSLTPNNRNVNANSNSETENDNDRDDRSNVGKVKFQPLKVHEPAISTFGKGNLTLEAVAGSSDIDNTTIDLDENNTNNNPNASSTNLSHISKSNVNNNLGPKELNTSYRNSTYIDMARFENSQSNLSSHRARSKTLPANKALENAVGDEGNSKRNSRYSSYSNDMAFDDADERKFRSMSKKFLNRRSFSPSNLGNKVIPGINLRNSFNKNRNSSSDFFSTNQGQQMPRTSTAGSGNIHAIMGLDSGNDDFKLEGIEYASEKKNSEFHTLFKDCDINPNEKLIVDHSCALSRDILLQGRMYISDAHIGFFSNILGWVSTVFIPFKEIVQIEKKTTAGIFPNGIVIDTLHTKYIFASFMSRDATFDLITDVWNQIILGKKYRNGFGNNDDGTISDSSSAFFDDSDDNDDDGDLDDDDPDINSTDMTSSDDIDADVFNESNDLGKNQKSTNYLLGPNKHSPTTADFKPSNNDHLVIEANINAPLGKVVNLLYGEDVSYYERILKAQKNFEISPIPNNFLTKKIRDYAYTKPLSGSIGPSKTKCLITDTLEHYDLEDYVKVLSITKNPDVPSGNIFSVKTVFLFSWDKNNSTKLTVYNSVDWTGKSWIKSMIEKGTFDGVADTTKIMISEIKKILSDEDSNINSKHQASNNESEEEIINLPTIGPPVHDPTEPDFQKGKDDTVIDEKINIPVPLGTVFSLLYGDDTSYIKKIIENQNNFNVCDIPKFVNNAREITYTKKLNNSFGPKQTKCIVTETIEHMDLNSFFMVKQIVRSPDVPYGSSFSVHTRFFYSWGDHNTTNMKVVTNVVWTGKSMLKGTIEKGSIDGQRSSTKQLVDDLKKIISNASSTKKKSRRRGKTVNKRKSSPSTIKNEKNEENFEDTSTKNSFFSAFSMLQQVNITSVQGIMTIISFFICLIFFFRLLFHSKNTSNIQIITPGTILINGNEYNYVPNFKTLYHVYEDNIIKDARRKDSNKNNIVTDTEGLIWDWLIDRGNGTVQNSVLSNHIKESNNKKVKLVNGVSDHKIQQLVESIKITELQLQEMKELLAQTDNTSATNQLL</sequence>
<dbReference type="EMBL" id="U32517">
    <property type="protein sequence ID" value="AAB64762.1"/>
    <property type="molecule type" value="Genomic_DNA"/>
</dbReference>
<dbReference type="EMBL" id="BK006938">
    <property type="protein sequence ID" value="DAA12169.1"/>
    <property type="molecule type" value="Genomic_DNA"/>
</dbReference>
<dbReference type="PIR" id="S59792">
    <property type="entry name" value="S59792"/>
</dbReference>
<dbReference type="RefSeq" id="NP_010613.1">
    <property type="nucleotide sequence ID" value="NM_001180634.1"/>
</dbReference>
<dbReference type="PDB" id="5YQI">
    <property type="method" value="X-ray"/>
    <property type="resolution" value="1.60 A"/>
    <property type="chains" value="A=851-1016"/>
</dbReference>
<dbReference type="PDB" id="5YQQ">
    <property type="method" value="X-ray"/>
    <property type="resolution" value="1.90 A"/>
    <property type="chains" value="A/B=1060-1223"/>
</dbReference>
<dbReference type="PDB" id="5YS0">
    <property type="method" value="X-ray"/>
    <property type="resolution" value="2.60 A"/>
    <property type="chains" value="A/B/C=1060-1223"/>
</dbReference>
<dbReference type="PDB" id="6CAY">
    <property type="method" value="X-ray"/>
    <property type="resolution" value="2.00 A"/>
    <property type="chains" value="A/B/C/D=851-1017"/>
</dbReference>
<dbReference type="PDBsum" id="5YQI"/>
<dbReference type="PDBsum" id="5YQQ"/>
<dbReference type="PDBsum" id="5YS0"/>
<dbReference type="PDBsum" id="6CAY"/>
<dbReference type="SMR" id="Q06681"/>
<dbReference type="BioGRID" id="32384">
    <property type="interactions" value="96"/>
</dbReference>
<dbReference type="DIP" id="DIP-1840N"/>
<dbReference type="FunCoup" id="Q06681">
    <property type="interactions" value="75"/>
</dbReference>
<dbReference type="IntAct" id="Q06681">
    <property type="interactions" value="6"/>
</dbReference>
<dbReference type="MINT" id="Q06681"/>
<dbReference type="STRING" id="4932.YDR326C"/>
<dbReference type="TCDB" id="9.B.198.2.1">
    <property type="family name" value="the membrane-anchored lipid-binding protein (lam) family"/>
</dbReference>
<dbReference type="GlyCosmos" id="Q06681">
    <property type="glycosylation" value="3 sites, No reported glycans"/>
</dbReference>
<dbReference type="GlyGen" id="Q06681">
    <property type="glycosylation" value="3 sites"/>
</dbReference>
<dbReference type="iPTMnet" id="Q06681"/>
<dbReference type="PaxDb" id="4932-YDR326C"/>
<dbReference type="PeptideAtlas" id="Q06681"/>
<dbReference type="EnsemblFungi" id="YDR326C_mRNA">
    <property type="protein sequence ID" value="YDR326C"/>
    <property type="gene ID" value="YDR326C"/>
</dbReference>
<dbReference type="GeneID" id="851926"/>
<dbReference type="KEGG" id="sce:YDR326C"/>
<dbReference type="AGR" id="SGD:S000002734"/>
<dbReference type="SGD" id="S000002734">
    <property type="gene designation" value="YSP2"/>
</dbReference>
<dbReference type="VEuPathDB" id="FungiDB:YDR326C"/>
<dbReference type="eggNOG" id="KOG1032">
    <property type="taxonomic scope" value="Eukaryota"/>
</dbReference>
<dbReference type="GeneTree" id="ENSGT00940000172082"/>
<dbReference type="HOGENOM" id="CLU_002908_0_0_1"/>
<dbReference type="InParanoid" id="Q06681"/>
<dbReference type="OMA" id="YIMVRQI"/>
<dbReference type="OrthoDB" id="2162691at2759"/>
<dbReference type="BioCyc" id="YEAST:G3O-29883-MONOMER"/>
<dbReference type="BioGRID-ORCS" id="851926">
    <property type="hits" value="0 hits in 10 CRISPR screens"/>
</dbReference>
<dbReference type="PRO" id="PR:Q06681"/>
<dbReference type="Proteomes" id="UP000002311">
    <property type="component" value="Chromosome IV"/>
</dbReference>
<dbReference type="RNAct" id="Q06681">
    <property type="molecule type" value="protein"/>
</dbReference>
<dbReference type="GO" id="GO:0071944">
    <property type="term" value="C:cell periphery"/>
    <property type="evidence" value="ECO:0007005"/>
    <property type="project" value="SGD"/>
</dbReference>
<dbReference type="GO" id="GO:0032541">
    <property type="term" value="C:cortical endoplasmic reticulum"/>
    <property type="evidence" value="ECO:0000314"/>
    <property type="project" value="SGD"/>
</dbReference>
<dbReference type="GO" id="GO:0005737">
    <property type="term" value="C:cytoplasm"/>
    <property type="evidence" value="ECO:0007005"/>
    <property type="project" value="SGD"/>
</dbReference>
<dbReference type="GO" id="GO:0005789">
    <property type="term" value="C:endoplasmic reticulum membrane"/>
    <property type="evidence" value="ECO:0000318"/>
    <property type="project" value="GO_Central"/>
</dbReference>
<dbReference type="GO" id="GO:0140268">
    <property type="term" value="C:endoplasmic reticulum-plasma membrane contact site"/>
    <property type="evidence" value="ECO:0000318"/>
    <property type="project" value="GO_Central"/>
</dbReference>
<dbReference type="GO" id="GO:0031966">
    <property type="term" value="C:mitochondrial membrane"/>
    <property type="evidence" value="ECO:0007669"/>
    <property type="project" value="UniProtKB-SubCell"/>
</dbReference>
<dbReference type="GO" id="GO:0005739">
    <property type="term" value="C:mitochondrion"/>
    <property type="evidence" value="ECO:0000314"/>
    <property type="project" value="SGD"/>
</dbReference>
<dbReference type="GO" id="GO:0005886">
    <property type="term" value="C:plasma membrane"/>
    <property type="evidence" value="ECO:0000318"/>
    <property type="project" value="GO_Central"/>
</dbReference>
<dbReference type="GO" id="GO:0032934">
    <property type="term" value="F:sterol binding"/>
    <property type="evidence" value="ECO:0000314"/>
    <property type="project" value="SGD"/>
</dbReference>
<dbReference type="GO" id="GO:0120015">
    <property type="term" value="F:sterol transfer activity"/>
    <property type="evidence" value="ECO:0000314"/>
    <property type="project" value="SGD"/>
</dbReference>
<dbReference type="GO" id="GO:0006915">
    <property type="term" value="P:apoptotic process"/>
    <property type="evidence" value="ECO:0007669"/>
    <property type="project" value="UniProtKB-KW"/>
</dbReference>
<dbReference type="GO" id="GO:0032366">
    <property type="term" value="P:intracellular sterol transport"/>
    <property type="evidence" value="ECO:0000315"/>
    <property type="project" value="SGD"/>
</dbReference>
<dbReference type="GO" id="GO:0015918">
    <property type="term" value="P:sterol transport"/>
    <property type="evidence" value="ECO:0000315"/>
    <property type="project" value="SGD"/>
</dbReference>
<dbReference type="CDD" id="cd13220">
    <property type="entry name" value="PH-GRAM_GRAMDC"/>
    <property type="match status" value="1"/>
</dbReference>
<dbReference type="Gene3D" id="2.30.29.30">
    <property type="entry name" value="Pleckstrin-homology domain (PH domain)/Phosphotyrosine-binding domain (PTB)"/>
    <property type="match status" value="1"/>
</dbReference>
<dbReference type="InterPro" id="IPR051482">
    <property type="entry name" value="Cholesterol_transport"/>
</dbReference>
<dbReference type="InterPro" id="IPR004182">
    <property type="entry name" value="GRAM"/>
</dbReference>
<dbReference type="InterPro" id="IPR011993">
    <property type="entry name" value="PH-like_dom_sf"/>
</dbReference>
<dbReference type="InterPro" id="IPR031968">
    <property type="entry name" value="VASt"/>
</dbReference>
<dbReference type="PANTHER" id="PTHR23319">
    <property type="entry name" value="GRAM DOMAIN CONTAINING 1B, ISOFORM E"/>
    <property type="match status" value="1"/>
</dbReference>
<dbReference type="PANTHER" id="PTHR23319:SF36">
    <property type="entry name" value="MEMBRANE-ANCHORED LIPID-BINDING PROTEIN LAM4-RELATED"/>
    <property type="match status" value="1"/>
</dbReference>
<dbReference type="Pfam" id="PF02893">
    <property type="entry name" value="GRAM"/>
    <property type="match status" value="1"/>
</dbReference>
<dbReference type="Pfam" id="PF16016">
    <property type="entry name" value="VASt"/>
    <property type="match status" value="2"/>
</dbReference>
<dbReference type="SMART" id="SM00568">
    <property type="entry name" value="GRAM"/>
    <property type="match status" value="1"/>
</dbReference>
<dbReference type="PROSITE" id="PS51778">
    <property type="entry name" value="VAST"/>
    <property type="match status" value="2"/>
</dbReference>
<accession>Q06681</accession>
<accession>D6VSV9</accession>